<protein>
    <recommendedName>
        <fullName evidence="1">Type III pantothenate kinase</fullName>
        <ecNumber evidence="1">2.7.1.33</ecNumber>
    </recommendedName>
    <alternativeName>
        <fullName evidence="1">PanK-III</fullName>
    </alternativeName>
    <alternativeName>
        <fullName evidence="1">Pantothenic acid kinase</fullName>
    </alternativeName>
</protein>
<keyword id="KW-0067">ATP-binding</keyword>
<keyword id="KW-0173">Coenzyme A biosynthesis</keyword>
<keyword id="KW-0963">Cytoplasm</keyword>
<keyword id="KW-0418">Kinase</keyword>
<keyword id="KW-0479">Metal-binding</keyword>
<keyword id="KW-0547">Nucleotide-binding</keyword>
<keyword id="KW-0630">Potassium</keyword>
<keyword id="KW-1185">Reference proteome</keyword>
<keyword id="KW-0808">Transferase</keyword>
<organism>
    <name type="scientific">Geotalea uraniireducens (strain Rf4)</name>
    <name type="common">Geobacter uraniireducens</name>
    <dbReference type="NCBI Taxonomy" id="351605"/>
    <lineage>
        <taxon>Bacteria</taxon>
        <taxon>Pseudomonadati</taxon>
        <taxon>Thermodesulfobacteriota</taxon>
        <taxon>Desulfuromonadia</taxon>
        <taxon>Geobacterales</taxon>
        <taxon>Geobacteraceae</taxon>
        <taxon>Geotalea</taxon>
    </lineage>
</organism>
<accession>A5G5C1</accession>
<name>COAX_GEOUR</name>
<evidence type="ECO:0000255" key="1">
    <source>
        <dbReference type="HAMAP-Rule" id="MF_01274"/>
    </source>
</evidence>
<gene>
    <name evidence="1" type="primary">coaX</name>
    <name type="ordered locus">Gura_2816</name>
</gene>
<proteinExistence type="inferred from homology"/>
<reference key="1">
    <citation type="submission" date="2007-05" db="EMBL/GenBank/DDBJ databases">
        <title>Complete sequence of Geobacter uraniireducens Rf4.</title>
        <authorList>
            <consortium name="US DOE Joint Genome Institute"/>
            <person name="Copeland A."/>
            <person name="Lucas S."/>
            <person name="Lapidus A."/>
            <person name="Barry K."/>
            <person name="Detter J.C."/>
            <person name="Glavina del Rio T."/>
            <person name="Hammon N."/>
            <person name="Israni S."/>
            <person name="Dalin E."/>
            <person name="Tice H."/>
            <person name="Pitluck S."/>
            <person name="Chertkov O."/>
            <person name="Brettin T."/>
            <person name="Bruce D."/>
            <person name="Han C."/>
            <person name="Schmutz J."/>
            <person name="Larimer F."/>
            <person name="Land M."/>
            <person name="Hauser L."/>
            <person name="Kyrpides N."/>
            <person name="Mikhailova N."/>
            <person name="Shelobolina E."/>
            <person name="Aklujkar M."/>
            <person name="Lovley D."/>
            <person name="Richardson P."/>
        </authorList>
    </citation>
    <scope>NUCLEOTIDE SEQUENCE [LARGE SCALE GENOMIC DNA]</scope>
    <source>
        <strain>ATCC BAA-1134 / JCM 13001 / Rf4</strain>
    </source>
</reference>
<dbReference type="EC" id="2.7.1.33" evidence="1"/>
<dbReference type="EMBL" id="CP000698">
    <property type="protein sequence ID" value="ABQ26989.1"/>
    <property type="molecule type" value="Genomic_DNA"/>
</dbReference>
<dbReference type="RefSeq" id="WP_011939663.1">
    <property type="nucleotide sequence ID" value="NC_009483.1"/>
</dbReference>
<dbReference type="SMR" id="A5G5C1"/>
<dbReference type="STRING" id="351605.Gura_2816"/>
<dbReference type="KEGG" id="gur:Gura_2816"/>
<dbReference type="HOGENOM" id="CLU_066627_1_0_7"/>
<dbReference type="OrthoDB" id="9804707at2"/>
<dbReference type="UniPathway" id="UPA00241">
    <property type="reaction ID" value="UER00352"/>
</dbReference>
<dbReference type="Proteomes" id="UP000006695">
    <property type="component" value="Chromosome"/>
</dbReference>
<dbReference type="GO" id="GO:0005737">
    <property type="term" value="C:cytoplasm"/>
    <property type="evidence" value="ECO:0007669"/>
    <property type="project" value="UniProtKB-SubCell"/>
</dbReference>
<dbReference type="GO" id="GO:0005524">
    <property type="term" value="F:ATP binding"/>
    <property type="evidence" value="ECO:0007669"/>
    <property type="project" value="UniProtKB-UniRule"/>
</dbReference>
<dbReference type="GO" id="GO:0046872">
    <property type="term" value="F:metal ion binding"/>
    <property type="evidence" value="ECO:0007669"/>
    <property type="project" value="UniProtKB-KW"/>
</dbReference>
<dbReference type="GO" id="GO:0004594">
    <property type="term" value="F:pantothenate kinase activity"/>
    <property type="evidence" value="ECO:0007669"/>
    <property type="project" value="UniProtKB-UniRule"/>
</dbReference>
<dbReference type="GO" id="GO:0015937">
    <property type="term" value="P:coenzyme A biosynthetic process"/>
    <property type="evidence" value="ECO:0007669"/>
    <property type="project" value="UniProtKB-UniRule"/>
</dbReference>
<dbReference type="CDD" id="cd24015">
    <property type="entry name" value="ASKHA_NBD_PanK-III"/>
    <property type="match status" value="1"/>
</dbReference>
<dbReference type="Gene3D" id="3.30.420.40">
    <property type="match status" value="2"/>
</dbReference>
<dbReference type="HAMAP" id="MF_01274">
    <property type="entry name" value="Pantothen_kinase_3"/>
    <property type="match status" value="1"/>
</dbReference>
<dbReference type="InterPro" id="IPR043129">
    <property type="entry name" value="ATPase_NBD"/>
</dbReference>
<dbReference type="InterPro" id="IPR004619">
    <property type="entry name" value="Type_III_PanK"/>
</dbReference>
<dbReference type="NCBIfam" id="TIGR00671">
    <property type="entry name" value="baf"/>
    <property type="match status" value="1"/>
</dbReference>
<dbReference type="NCBIfam" id="NF009847">
    <property type="entry name" value="PRK13318.1-5"/>
    <property type="match status" value="1"/>
</dbReference>
<dbReference type="NCBIfam" id="NF009848">
    <property type="entry name" value="PRK13318.1-6"/>
    <property type="match status" value="1"/>
</dbReference>
<dbReference type="NCBIfam" id="NF009855">
    <property type="entry name" value="PRK13321.1"/>
    <property type="match status" value="1"/>
</dbReference>
<dbReference type="PANTHER" id="PTHR34265">
    <property type="entry name" value="TYPE III PANTOTHENATE KINASE"/>
    <property type="match status" value="1"/>
</dbReference>
<dbReference type="PANTHER" id="PTHR34265:SF1">
    <property type="entry name" value="TYPE III PANTOTHENATE KINASE"/>
    <property type="match status" value="1"/>
</dbReference>
<dbReference type="Pfam" id="PF03309">
    <property type="entry name" value="Pan_kinase"/>
    <property type="match status" value="1"/>
</dbReference>
<dbReference type="SUPFAM" id="SSF53067">
    <property type="entry name" value="Actin-like ATPase domain"/>
    <property type="match status" value="2"/>
</dbReference>
<feature type="chain" id="PRO_1000085854" description="Type III pantothenate kinase">
    <location>
        <begin position="1"/>
        <end position="256"/>
    </location>
</feature>
<feature type="active site" description="Proton acceptor" evidence="1">
    <location>
        <position position="109"/>
    </location>
</feature>
<feature type="binding site" evidence="1">
    <location>
        <begin position="6"/>
        <end position="13"/>
    </location>
    <ligand>
        <name>ATP</name>
        <dbReference type="ChEBI" id="CHEBI:30616"/>
    </ligand>
</feature>
<feature type="binding site" evidence="1">
    <location>
        <position position="100"/>
    </location>
    <ligand>
        <name>substrate</name>
    </ligand>
</feature>
<feature type="binding site" evidence="1">
    <location>
        <begin position="107"/>
        <end position="110"/>
    </location>
    <ligand>
        <name>substrate</name>
    </ligand>
</feature>
<feature type="binding site" evidence="1">
    <location>
        <position position="129"/>
    </location>
    <ligand>
        <name>K(+)</name>
        <dbReference type="ChEBI" id="CHEBI:29103"/>
    </ligand>
</feature>
<feature type="binding site" evidence="1">
    <location>
        <position position="132"/>
    </location>
    <ligand>
        <name>ATP</name>
        <dbReference type="ChEBI" id="CHEBI:30616"/>
    </ligand>
</feature>
<feature type="binding site" evidence="1">
    <location>
        <position position="184"/>
    </location>
    <ligand>
        <name>substrate</name>
    </ligand>
</feature>
<comment type="function">
    <text evidence="1">Catalyzes the phosphorylation of pantothenate (Pan), the first step in CoA biosynthesis.</text>
</comment>
<comment type="catalytic activity">
    <reaction evidence="1">
        <text>(R)-pantothenate + ATP = (R)-4'-phosphopantothenate + ADP + H(+)</text>
        <dbReference type="Rhea" id="RHEA:16373"/>
        <dbReference type="ChEBI" id="CHEBI:10986"/>
        <dbReference type="ChEBI" id="CHEBI:15378"/>
        <dbReference type="ChEBI" id="CHEBI:29032"/>
        <dbReference type="ChEBI" id="CHEBI:30616"/>
        <dbReference type="ChEBI" id="CHEBI:456216"/>
        <dbReference type="EC" id="2.7.1.33"/>
    </reaction>
</comment>
<comment type="cofactor">
    <cofactor evidence="1">
        <name>NH4(+)</name>
        <dbReference type="ChEBI" id="CHEBI:28938"/>
    </cofactor>
    <cofactor evidence="1">
        <name>K(+)</name>
        <dbReference type="ChEBI" id="CHEBI:29103"/>
    </cofactor>
    <text evidence="1">A monovalent cation. Ammonium or potassium.</text>
</comment>
<comment type="pathway">
    <text evidence="1">Cofactor biosynthesis; coenzyme A biosynthesis; CoA from (R)-pantothenate: step 1/5.</text>
</comment>
<comment type="subunit">
    <text evidence="1">Homodimer.</text>
</comment>
<comment type="subcellular location">
    <subcellularLocation>
        <location evidence="1">Cytoplasm</location>
    </subcellularLocation>
</comment>
<comment type="similarity">
    <text evidence="1">Belongs to the type III pantothenate kinase family.</text>
</comment>
<sequence length="256" mass="27958">MLLVIDVGNSNIVLGIYDNERLVRDWRVSTDKSKTPDEYGILVHDLFRLAGIGFSDIKDIIISSVVPTLTGALEKLSRQYFGFKPYVVGPGIKTGMPIQYDNPKEVGADRIVNAVAGFEKHHCALIIVDFGTATTFDYVNKRGEYCGGAIAPGLMISMEALFQKASKLPRVEIAKPPAIIAKNTVNSMQAGIYYGYVGLVDGIVTRMKGEGKDNPRVIATGGLAGLIAPESATIEEVDEYLTLEGLRILYQRNRET</sequence>